<organism>
    <name type="scientific">Citrifermentans bemidjiense (strain ATCC BAA-1014 / DSM 16622 / JCM 12645 / Bem)</name>
    <name type="common">Geobacter bemidjiensis</name>
    <dbReference type="NCBI Taxonomy" id="404380"/>
    <lineage>
        <taxon>Bacteria</taxon>
        <taxon>Pseudomonadati</taxon>
        <taxon>Thermodesulfobacteriota</taxon>
        <taxon>Desulfuromonadia</taxon>
        <taxon>Geobacterales</taxon>
        <taxon>Geobacteraceae</taxon>
        <taxon>Citrifermentans</taxon>
    </lineage>
</organism>
<proteinExistence type="inferred from homology"/>
<dbReference type="EC" id="2.4.2.18" evidence="1"/>
<dbReference type="EMBL" id="CP001124">
    <property type="protein sequence ID" value="ACH38970.1"/>
    <property type="molecule type" value="Genomic_DNA"/>
</dbReference>
<dbReference type="RefSeq" id="WP_012530388.1">
    <property type="nucleotide sequence ID" value="NC_011146.1"/>
</dbReference>
<dbReference type="SMR" id="B5EBU6"/>
<dbReference type="STRING" id="404380.Gbem_1956"/>
<dbReference type="KEGG" id="gbm:Gbem_1956"/>
<dbReference type="eggNOG" id="COG0547">
    <property type="taxonomic scope" value="Bacteria"/>
</dbReference>
<dbReference type="HOGENOM" id="CLU_034315_2_1_7"/>
<dbReference type="OrthoDB" id="9806430at2"/>
<dbReference type="UniPathway" id="UPA00035">
    <property type="reaction ID" value="UER00041"/>
</dbReference>
<dbReference type="Proteomes" id="UP000008825">
    <property type="component" value="Chromosome"/>
</dbReference>
<dbReference type="GO" id="GO:0005829">
    <property type="term" value="C:cytosol"/>
    <property type="evidence" value="ECO:0007669"/>
    <property type="project" value="TreeGrafter"/>
</dbReference>
<dbReference type="GO" id="GO:0004048">
    <property type="term" value="F:anthranilate phosphoribosyltransferase activity"/>
    <property type="evidence" value="ECO:0007669"/>
    <property type="project" value="UniProtKB-UniRule"/>
</dbReference>
<dbReference type="GO" id="GO:0000287">
    <property type="term" value="F:magnesium ion binding"/>
    <property type="evidence" value="ECO:0007669"/>
    <property type="project" value="UniProtKB-UniRule"/>
</dbReference>
<dbReference type="GO" id="GO:0000162">
    <property type="term" value="P:L-tryptophan biosynthetic process"/>
    <property type="evidence" value="ECO:0007669"/>
    <property type="project" value="UniProtKB-UniRule"/>
</dbReference>
<dbReference type="FunFam" id="1.20.970.10:FF:000006">
    <property type="entry name" value="Anthranilate phosphoribosyltransferase"/>
    <property type="match status" value="1"/>
</dbReference>
<dbReference type="FunFam" id="3.40.1030.10:FF:000002">
    <property type="entry name" value="Anthranilate phosphoribosyltransferase"/>
    <property type="match status" value="1"/>
</dbReference>
<dbReference type="Gene3D" id="3.40.1030.10">
    <property type="entry name" value="Nucleoside phosphorylase/phosphoribosyltransferase catalytic domain"/>
    <property type="match status" value="1"/>
</dbReference>
<dbReference type="Gene3D" id="1.20.970.10">
    <property type="entry name" value="Transferase, Pyrimidine Nucleoside Phosphorylase, Chain C"/>
    <property type="match status" value="1"/>
</dbReference>
<dbReference type="HAMAP" id="MF_00211">
    <property type="entry name" value="TrpD"/>
    <property type="match status" value="1"/>
</dbReference>
<dbReference type="InterPro" id="IPR005940">
    <property type="entry name" value="Anthranilate_Pribosyl_Tfrase"/>
</dbReference>
<dbReference type="InterPro" id="IPR000312">
    <property type="entry name" value="Glycosyl_Trfase_fam3"/>
</dbReference>
<dbReference type="InterPro" id="IPR017459">
    <property type="entry name" value="Glycosyl_Trfase_fam3_N_dom"/>
</dbReference>
<dbReference type="InterPro" id="IPR036320">
    <property type="entry name" value="Glycosyl_Trfase_fam3_N_dom_sf"/>
</dbReference>
<dbReference type="InterPro" id="IPR035902">
    <property type="entry name" value="Nuc_phospho_transferase"/>
</dbReference>
<dbReference type="NCBIfam" id="TIGR01245">
    <property type="entry name" value="trpD"/>
    <property type="match status" value="1"/>
</dbReference>
<dbReference type="PANTHER" id="PTHR43285">
    <property type="entry name" value="ANTHRANILATE PHOSPHORIBOSYLTRANSFERASE"/>
    <property type="match status" value="1"/>
</dbReference>
<dbReference type="PANTHER" id="PTHR43285:SF2">
    <property type="entry name" value="ANTHRANILATE PHOSPHORIBOSYLTRANSFERASE"/>
    <property type="match status" value="1"/>
</dbReference>
<dbReference type="Pfam" id="PF02885">
    <property type="entry name" value="Glycos_trans_3N"/>
    <property type="match status" value="1"/>
</dbReference>
<dbReference type="Pfam" id="PF00591">
    <property type="entry name" value="Glycos_transf_3"/>
    <property type="match status" value="1"/>
</dbReference>
<dbReference type="SUPFAM" id="SSF52418">
    <property type="entry name" value="Nucleoside phosphorylase/phosphoribosyltransferase catalytic domain"/>
    <property type="match status" value="1"/>
</dbReference>
<dbReference type="SUPFAM" id="SSF47648">
    <property type="entry name" value="Nucleoside phosphorylase/phosphoribosyltransferase N-terminal domain"/>
    <property type="match status" value="1"/>
</dbReference>
<comment type="function">
    <text evidence="1">Catalyzes the transfer of the phosphoribosyl group of 5-phosphorylribose-1-pyrophosphate (PRPP) to anthranilate to yield N-(5'-phosphoribosyl)-anthranilate (PRA).</text>
</comment>
<comment type="catalytic activity">
    <reaction evidence="1">
        <text>N-(5-phospho-beta-D-ribosyl)anthranilate + diphosphate = 5-phospho-alpha-D-ribose 1-diphosphate + anthranilate</text>
        <dbReference type="Rhea" id="RHEA:11768"/>
        <dbReference type="ChEBI" id="CHEBI:16567"/>
        <dbReference type="ChEBI" id="CHEBI:18277"/>
        <dbReference type="ChEBI" id="CHEBI:33019"/>
        <dbReference type="ChEBI" id="CHEBI:58017"/>
        <dbReference type="EC" id="2.4.2.18"/>
    </reaction>
</comment>
<comment type="cofactor">
    <cofactor evidence="1">
        <name>Mg(2+)</name>
        <dbReference type="ChEBI" id="CHEBI:18420"/>
    </cofactor>
    <text evidence="1">Binds 2 magnesium ions per monomer.</text>
</comment>
<comment type="pathway">
    <text evidence="1">Amino-acid biosynthesis; L-tryptophan biosynthesis; L-tryptophan from chorismate: step 2/5.</text>
</comment>
<comment type="subunit">
    <text evidence="1">Homodimer.</text>
</comment>
<comment type="similarity">
    <text evidence="1">Belongs to the anthranilate phosphoribosyltransferase family.</text>
</comment>
<protein>
    <recommendedName>
        <fullName evidence="1">Anthranilate phosphoribosyltransferase</fullName>
        <ecNumber evidence="1">2.4.2.18</ecNumber>
    </recommendedName>
</protein>
<name>TRPD_CITBB</name>
<evidence type="ECO:0000255" key="1">
    <source>
        <dbReference type="HAMAP-Rule" id="MF_00211"/>
    </source>
</evidence>
<gene>
    <name evidence="1" type="primary">trpD</name>
    <name type="ordered locus">Gbem_1956</name>
</gene>
<reference key="1">
    <citation type="submission" date="2008-07" db="EMBL/GenBank/DDBJ databases">
        <title>Complete sequence of Geobacter bemidjiensis BEM.</title>
        <authorList>
            <consortium name="US DOE Joint Genome Institute"/>
            <person name="Lucas S."/>
            <person name="Copeland A."/>
            <person name="Lapidus A."/>
            <person name="Glavina del Rio T."/>
            <person name="Dalin E."/>
            <person name="Tice H."/>
            <person name="Bruce D."/>
            <person name="Goodwin L."/>
            <person name="Pitluck S."/>
            <person name="Kiss H."/>
            <person name="Brettin T."/>
            <person name="Detter J.C."/>
            <person name="Han C."/>
            <person name="Kuske C.R."/>
            <person name="Schmutz J."/>
            <person name="Larimer F."/>
            <person name="Land M."/>
            <person name="Hauser L."/>
            <person name="Kyrpides N."/>
            <person name="Lykidis A."/>
            <person name="Lovley D."/>
            <person name="Richardson P."/>
        </authorList>
    </citation>
    <scope>NUCLEOTIDE SEQUENCE [LARGE SCALE GENOMIC DNA]</scope>
    <source>
        <strain>ATCC BAA-1014 / DSM 16622 / JCM 12645 / Bem</strain>
    </source>
</reference>
<feature type="chain" id="PRO_1000099806" description="Anthranilate phosphoribosyltransferase">
    <location>
        <begin position="1"/>
        <end position="352"/>
    </location>
</feature>
<feature type="binding site" evidence="1">
    <location>
        <position position="94"/>
    </location>
    <ligand>
        <name>5-phospho-alpha-D-ribose 1-diphosphate</name>
        <dbReference type="ChEBI" id="CHEBI:58017"/>
    </ligand>
</feature>
<feature type="binding site" evidence="1">
    <location>
        <position position="94"/>
    </location>
    <ligand>
        <name>anthranilate</name>
        <dbReference type="ChEBI" id="CHEBI:16567"/>
        <label>1</label>
    </ligand>
</feature>
<feature type="binding site" evidence="1">
    <location>
        <begin position="97"/>
        <end position="98"/>
    </location>
    <ligand>
        <name>5-phospho-alpha-D-ribose 1-diphosphate</name>
        <dbReference type="ChEBI" id="CHEBI:58017"/>
    </ligand>
</feature>
<feature type="binding site" evidence="1">
    <location>
        <position position="102"/>
    </location>
    <ligand>
        <name>5-phospho-alpha-D-ribose 1-diphosphate</name>
        <dbReference type="ChEBI" id="CHEBI:58017"/>
    </ligand>
</feature>
<feature type="binding site" evidence="1">
    <location>
        <begin position="104"/>
        <end position="107"/>
    </location>
    <ligand>
        <name>5-phospho-alpha-D-ribose 1-diphosphate</name>
        <dbReference type="ChEBI" id="CHEBI:58017"/>
    </ligand>
</feature>
<feature type="binding site" evidence="1">
    <location>
        <position position="106"/>
    </location>
    <ligand>
        <name>Mg(2+)</name>
        <dbReference type="ChEBI" id="CHEBI:18420"/>
        <label>1</label>
    </ligand>
</feature>
<feature type="binding site" evidence="1">
    <location>
        <begin position="122"/>
        <end position="130"/>
    </location>
    <ligand>
        <name>5-phospho-alpha-D-ribose 1-diphosphate</name>
        <dbReference type="ChEBI" id="CHEBI:58017"/>
    </ligand>
</feature>
<feature type="binding site" evidence="1">
    <location>
        <position position="125"/>
    </location>
    <ligand>
        <name>anthranilate</name>
        <dbReference type="ChEBI" id="CHEBI:16567"/>
        <label>1</label>
    </ligand>
</feature>
<feature type="binding site" evidence="1">
    <location>
        <position position="134"/>
    </location>
    <ligand>
        <name>5-phospho-alpha-D-ribose 1-diphosphate</name>
        <dbReference type="ChEBI" id="CHEBI:58017"/>
    </ligand>
</feature>
<feature type="binding site" evidence="1">
    <location>
        <position position="180"/>
    </location>
    <ligand>
        <name>anthranilate</name>
        <dbReference type="ChEBI" id="CHEBI:16567"/>
        <label>2</label>
    </ligand>
</feature>
<feature type="binding site" evidence="1">
    <location>
        <position position="239"/>
    </location>
    <ligand>
        <name>Mg(2+)</name>
        <dbReference type="ChEBI" id="CHEBI:18420"/>
        <label>2</label>
    </ligand>
</feature>
<feature type="binding site" evidence="1">
    <location>
        <position position="240"/>
    </location>
    <ligand>
        <name>Mg(2+)</name>
        <dbReference type="ChEBI" id="CHEBI:18420"/>
        <label>1</label>
    </ligand>
</feature>
<feature type="binding site" evidence="1">
    <location>
        <position position="240"/>
    </location>
    <ligand>
        <name>Mg(2+)</name>
        <dbReference type="ChEBI" id="CHEBI:18420"/>
        <label>2</label>
    </ligand>
</feature>
<accession>B5EBU6</accession>
<keyword id="KW-0028">Amino-acid biosynthesis</keyword>
<keyword id="KW-0057">Aromatic amino acid biosynthesis</keyword>
<keyword id="KW-0328">Glycosyltransferase</keyword>
<keyword id="KW-0460">Magnesium</keyword>
<keyword id="KW-0479">Metal-binding</keyword>
<keyword id="KW-1185">Reference proteome</keyword>
<keyword id="KW-0808">Transferase</keyword>
<keyword id="KW-0822">Tryptophan biosynthesis</keyword>
<sequence>MIRKAIARVVERQDLSEAEMIEVMDQVMSGGATPAQIASFITALRMKGETVDEITGAARVMRDRALPIRVGKSVLGIDRDDINLDRETILDTCGTGGSGTNSFNISTTVAFIVSACGVKVAKHGNRAVSSSCGSADVLEALGVNLDVTPDVVERSIAQIGIGFLFAPALHGAMKHAIGPRREIGIRTIFNILGPLTNPAGADCQVLGVYREDLVEKLAQVLKKLGCRSGFVVHGCDGMDEITLTGESTVAEITADGVKLYKVTPEQFGLERAPLAELHGGDALGNAVIVRDILSGKDGAKRRIVLLNAGYALVATGKAKDVAEGIRLAAETIDSGAAMKQLERLVALTNEAE</sequence>